<accession>Q45Z27</accession>
<organism>
    <name type="scientific">Tropidechis carinatus</name>
    <name type="common">Australian rough-scaled snake</name>
    <dbReference type="NCBI Taxonomy" id="100989"/>
    <lineage>
        <taxon>Eukaryota</taxon>
        <taxon>Metazoa</taxon>
        <taxon>Chordata</taxon>
        <taxon>Craniata</taxon>
        <taxon>Vertebrata</taxon>
        <taxon>Euteleostomi</taxon>
        <taxon>Lepidosauria</taxon>
        <taxon>Squamata</taxon>
        <taxon>Bifurcata</taxon>
        <taxon>Unidentata</taxon>
        <taxon>Episquamata</taxon>
        <taxon>Toxicofera</taxon>
        <taxon>Serpentes</taxon>
        <taxon>Colubroidea</taxon>
        <taxon>Elapidae</taxon>
        <taxon>Notechinae</taxon>
        <taxon>Tropidechis</taxon>
    </lineage>
</organism>
<sequence>MYPAHLLVLLAVCVSLLGAASIPARPLNLYQFGNMIQCANHGRRPTRHYMDYGCYCGKGGSGTPVDELDRCCQTHDDCYGEAEKLPACNYMMSGPYYNTYSYECNDGELTCKDNNDECKAFICNCDRTAAICFARTPYNDANWNINTKTSC</sequence>
<name>PA2A4_TROCA</name>
<proteinExistence type="evidence at transcript level"/>
<comment type="function">
    <text>PLA2 catalyzes the calcium-dependent hydrolysis of the 2-acyl groups in 3-sn-phosphoglycerides.</text>
</comment>
<comment type="catalytic activity">
    <reaction evidence="3 4">
        <text>a 1,2-diacyl-sn-glycero-3-phosphocholine + H2O = a 1-acyl-sn-glycero-3-phosphocholine + a fatty acid + H(+)</text>
        <dbReference type="Rhea" id="RHEA:15801"/>
        <dbReference type="ChEBI" id="CHEBI:15377"/>
        <dbReference type="ChEBI" id="CHEBI:15378"/>
        <dbReference type="ChEBI" id="CHEBI:28868"/>
        <dbReference type="ChEBI" id="CHEBI:57643"/>
        <dbReference type="ChEBI" id="CHEBI:58168"/>
        <dbReference type="EC" id="3.1.1.4"/>
    </reaction>
</comment>
<comment type="cofactor">
    <cofactor evidence="1">
        <name>Ca(2+)</name>
        <dbReference type="ChEBI" id="CHEBI:29108"/>
    </cofactor>
    <text evidence="1">Binds 1 Ca(2+) ion.</text>
</comment>
<comment type="subcellular location">
    <subcellularLocation>
        <location>Secreted</location>
    </subcellularLocation>
</comment>
<comment type="tissue specificity">
    <text>Expressed by the venom gland.</text>
</comment>
<comment type="similarity">
    <text evidence="5">Belongs to the phospholipase A2 family. Group I subfamily. D49 sub-subfamily.</text>
</comment>
<reference key="1">
    <citation type="journal article" date="2005" name="Cell. Mol. Life Sci.">
        <title>Identification and analysis of venom gland-specific genes from the coastal taipan (Oxyuranus scutellatus) and related species.</title>
        <authorList>
            <person name="St Pierre L."/>
            <person name="Woods R."/>
            <person name="Earl S.T.H."/>
            <person name="Masci P.P."/>
            <person name="Lavin M.F."/>
        </authorList>
    </citation>
    <scope>NUCLEOTIDE SEQUENCE [MRNA]</scope>
    <source>
        <tissue>Venom gland</tissue>
    </source>
</reference>
<dbReference type="EC" id="3.1.1.4"/>
<dbReference type="EMBL" id="DQ085839">
    <property type="protein sequence ID" value="AAZ22657.1"/>
    <property type="molecule type" value="mRNA"/>
</dbReference>
<dbReference type="SMR" id="Q45Z27"/>
<dbReference type="GO" id="GO:0005576">
    <property type="term" value="C:extracellular region"/>
    <property type="evidence" value="ECO:0007669"/>
    <property type="project" value="UniProtKB-SubCell"/>
</dbReference>
<dbReference type="GO" id="GO:0005509">
    <property type="term" value="F:calcium ion binding"/>
    <property type="evidence" value="ECO:0007669"/>
    <property type="project" value="InterPro"/>
</dbReference>
<dbReference type="GO" id="GO:0047498">
    <property type="term" value="F:calcium-dependent phospholipase A2 activity"/>
    <property type="evidence" value="ECO:0007669"/>
    <property type="project" value="TreeGrafter"/>
</dbReference>
<dbReference type="GO" id="GO:0005543">
    <property type="term" value="F:phospholipid binding"/>
    <property type="evidence" value="ECO:0007669"/>
    <property type="project" value="TreeGrafter"/>
</dbReference>
<dbReference type="GO" id="GO:0005102">
    <property type="term" value="F:signaling receptor binding"/>
    <property type="evidence" value="ECO:0007669"/>
    <property type="project" value="TreeGrafter"/>
</dbReference>
<dbReference type="GO" id="GO:0090729">
    <property type="term" value="F:toxin activity"/>
    <property type="evidence" value="ECO:0007669"/>
    <property type="project" value="UniProtKB-KW"/>
</dbReference>
<dbReference type="GO" id="GO:0050482">
    <property type="term" value="P:arachidonate secretion"/>
    <property type="evidence" value="ECO:0007669"/>
    <property type="project" value="InterPro"/>
</dbReference>
<dbReference type="GO" id="GO:0006633">
    <property type="term" value="P:fatty acid biosynthetic process"/>
    <property type="evidence" value="ECO:0007669"/>
    <property type="project" value="TreeGrafter"/>
</dbReference>
<dbReference type="GO" id="GO:0016042">
    <property type="term" value="P:lipid catabolic process"/>
    <property type="evidence" value="ECO:0007669"/>
    <property type="project" value="UniProtKB-KW"/>
</dbReference>
<dbReference type="GO" id="GO:0006644">
    <property type="term" value="P:phospholipid metabolic process"/>
    <property type="evidence" value="ECO:0007669"/>
    <property type="project" value="InterPro"/>
</dbReference>
<dbReference type="GO" id="GO:0048146">
    <property type="term" value="P:positive regulation of fibroblast proliferation"/>
    <property type="evidence" value="ECO:0007669"/>
    <property type="project" value="TreeGrafter"/>
</dbReference>
<dbReference type="CDD" id="cd00125">
    <property type="entry name" value="PLA2c"/>
    <property type="match status" value="1"/>
</dbReference>
<dbReference type="FunFam" id="1.20.90.10:FF:000007">
    <property type="entry name" value="Acidic phospholipase A2"/>
    <property type="match status" value="1"/>
</dbReference>
<dbReference type="Gene3D" id="1.20.90.10">
    <property type="entry name" value="Phospholipase A2 domain"/>
    <property type="match status" value="1"/>
</dbReference>
<dbReference type="InterPro" id="IPR001211">
    <property type="entry name" value="PLipase_A2"/>
</dbReference>
<dbReference type="InterPro" id="IPR033112">
    <property type="entry name" value="PLipase_A2_Asp_AS"/>
</dbReference>
<dbReference type="InterPro" id="IPR016090">
    <property type="entry name" value="PLipase_A2_dom"/>
</dbReference>
<dbReference type="InterPro" id="IPR036444">
    <property type="entry name" value="PLipase_A2_dom_sf"/>
</dbReference>
<dbReference type="InterPro" id="IPR033113">
    <property type="entry name" value="PLipase_A2_His_AS"/>
</dbReference>
<dbReference type="PANTHER" id="PTHR11716:SF94">
    <property type="entry name" value="PHOSPHOLIPASE A2"/>
    <property type="match status" value="1"/>
</dbReference>
<dbReference type="PANTHER" id="PTHR11716">
    <property type="entry name" value="PHOSPHOLIPASE A2 FAMILY MEMBER"/>
    <property type="match status" value="1"/>
</dbReference>
<dbReference type="Pfam" id="PF00068">
    <property type="entry name" value="Phospholip_A2_1"/>
    <property type="match status" value="1"/>
</dbReference>
<dbReference type="PRINTS" id="PR00389">
    <property type="entry name" value="PHPHLIPASEA2"/>
</dbReference>
<dbReference type="SMART" id="SM00085">
    <property type="entry name" value="PA2c"/>
    <property type="match status" value="1"/>
</dbReference>
<dbReference type="SUPFAM" id="SSF48619">
    <property type="entry name" value="Phospholipase A2, PLA2"/>
    <property type="match status" value="1"/>
</dbReference>
<dbReference type="PROSITE" id="PS00119">
    <property type="entry name" value="PA2_ASP"/>
    <property type="match status" value="1"/>
</dbReference>
<dbReference type="PROSITE" id="PS00118">
    <property type="entry name" value="PA2_HIS"/>
    <property type="match status" value="1"/>
</dbReference>
<evidence type="ECO:0000250" key="1"/>
<evidence type="ECO:0000255" key="2"/>
<evidence type="ECO:0000255" key="3">
    <source>
        <dbReference type="PROSITE-ProRule" id="PRU10035"/>
    </source>
</evidence>
<evidence type="ECO:0000255" key="4">
    <source>
        <dbReference type="PROSITE-ProRule" id="PRU10036"/>
    </source>
</evidence>
<evidence type="ECO:0000305" key="5"/>
<keyword id="KW-0106">Calcium</keyword>
<keyword id="KW-1015">Disulfide bond</keyword>
<keyword id="KW-0378">Hydrolase</keyword>
<keyword id="KW-0442">Lipid degradation</keyword>
<keyword id="KW-0443">Lipid metabolism</keyword>
<keyword id="KW-0479">Metal-binding</keyword>
<keyword id="KW-0964">Secreted</keyword>
<keyword id="KW-0732">Signal</keyword>
<keyword id="KW-0800">Toxin</keyword>
<feature type="signal peptide" evidence="2">
    <location>
        <begin position="1"/>
        <end position="27"/>
    </location>
</feature>
<feature type="chain" id="PRO_0000043279" description="Acidic phospholipase A2 4">
    <location>
        <begin position="28"/>
        <end position="151"/>
    </location>
</feature>
<feature type="active site" evidence="1">
    <location>
        <position position="75"/>
    </location>
</feature>
<feature type="active site" evidence="1">
    <location>
        <position position="126"/>
    </location>
</feature>
<feature type="binding site" evidence="1">
    <location>
        <position position="55"/>
    </location>
    <ligand>
        <name>Ca(2+)</name>
        <dbReference type="ChEBI" id="CHEBI:29108"/>
    </ligand>
</feature>
<feature type="binding site" evidence="1">
    <location>
        <position position="57"/>
    </location>
    <ligand>
        <name>Ca(2+)</name>
        <dbReference type="ChEBI" id="CHEBI:29108"/>
    </ligand>
</feature>
<feature type="binding site" evidence="1">
    <location>
        <position position="59"/>
    </location>
    <ligand>
        <name>Ca(2+)</name>
        <dbReference type="ChEBI" id="CHEBI:29108"/>
    </ligand>
</feature>
<feature type="binding site" evidence="1">
    <location>
        <position position="76"/>
    </location>
    <ligand>
        <name>Ca(2+)</name>
        <dbReference type="ChEBI" id="CHEBI:29108"/>
    </ligand>
</feature>
<feature type="disulfide bond" evidence="1">
    <location>
        <begin position="38"/>
        <end position="104"/>
    </location>
</feature>
<feature type="disulfide bond" evidence="1">
    <location>
        <begin position="54"/>
        <end position="151"/>
    </location>
</feature>
<feature type="disulfide bond" evidence="1">
    <location>
        <begin position="56"/>
        <end position="72"/>
    </location>
</feature>
<feature type="disulfide bond" evidence="1">
    <location>
        <begin position="71"/>
        <end position="132"/>
    </location>
</feature>
<feature type="disulfide bond" evidence="1">
    <location>
        <begin position="78"/>
        <end position="125"/>
    </location>
</feature>
<feature type="disulfide bond" evidence="1">
    <location>
        <begin position="88"/>
        <end position="118"/>
    </location>
</feature>
<feature type="disulfide bond" evidence="1">
    <location>
        <begin position="111"/>
        <end position="123"/>
    </location>
</feature>
<protein>
    <recommendedName>
        <fullName>Acidic phospholipase A2 4</fullName>
        <shortName>svPLA2</shortName>
        <ecNumber>3.1.1.4</ecNumber>
    </recommendedName>
    <alternativeName>
        <fullName>Phosphatidylcholine 2-acylhydrolase 4</fullName>
        <shortName>PLA-4</shortName>
    </alternativeName>
</protein>